<protein>
    <recommendedName>
        <fullName>Alpha-acetolactate decarboxylase</fullName>
        <ecNumber>4.1.1.5</ecNumber>
    </recommendedName>
</protein>
<accession>Q8PZ55</accession>
<sequence>MNIKYFLIFLILLAVTSFTLFSGCTGFAGNTPETSGKNSNVESIENLVPDISNNASDVLYQVSTIDALLLGVYDGVLPVSDLKTHGDFGIGTFDGLEGEMLALDGNYYQIKTDGIAYPVSGEITTPFATVTYFEADETFRLEKSANLSELEDFLDLNLPSENLFYAVKVDGNFSYVKARSVPRQEKPYLQLADAVSSQSVFEFENVSGTLVGFRTPEYVKGVNVPGYHLHFITENRSAGGHVLDLEMEKGDAALDITSIFLMELPASGDFYNAELGQNLQEDLEKVEK</sequence>
<name>ALDC_METMA</name>
<proteinExistence type="inferred from homology"/>
<feature type="signal peptide" evidence="2">
    <location>
        <begin position="1"/>
        <end position="23"/>
    </location>
</feature>
<feature type="chain" id="PRO_0000403436" description="Alpha-acetolactate decarboxylase">
    <location>
        <begin position="24"/>
        <end position="288"/>
    </location>
</feature>
<evidence type="ECO:0000250" key="1"/>
<evidence type="ECO:0000255" key="2"/>
<evidence type="ECO:0000305" key="3"/>
<gene>
    <name type="ordered locus">MM_0639</name>
</gene>
<organism>
    <name type="scientific">Methanosarcina mazei (strain ATCC BAA-159 / DSM 3647 / Goe1 / Go1 / JCM 11833 / OCM 88)</name>
    <name type="common">Methanosarcina frisia</name>
    <dbReference type="NCBI Taxonomy" id="192952"/>
    <lineage>
        <taxon>Archaea</taxon>
        <taxon>Methanobacteriati</taxon>
        <taxon>Methanobacteriota</taxon>
        <taxon>Stenosarchaea group</taxon>
        <taxon>Methanomicrobia</taxon>
        <taxon>Methanosarcinales</taxon>
        <taxon>Methanosarcinaceae</taxon>
        <taxon>Methanosarcina</taxon>
    </lineage>
</organism>
<keyword id="KW-0005">Acetoin biosynthesis</keyword>
<keyword id="KW-0210">Decarboxylase</keyword>
<keyword id="KW-0456">Lyase</keyword>
<keyword id="KW-0732">Signal</keyword>
<reference key="1">
    <citation type="journal article" date="2002" name="J. Mol. Microbiol. Biotechnol.">
        <title>The genome of Methanosarcina mazei: evidence for lateral gene transfer between Bacteria and Archaea.</title>
        <authorList>
            <person name="Deppenmeier U."/>
            <person name="Johann A."/>
            <person name="Hartsch T."/>
            <person name="Merkl R."/>
            <person name="Schmitz R.A."/>
            <person name="Martinez-Arias R."/>
            <person name="Henne A."/>
            <person name="Wiezer A."/>
            <person name="Baeumer S."/>
            <person name="Jacobi C."/>
            <person name="Brueggemann H."/>
            <person name="Lienard T."/>
            <person name="Christmann A."/>
            <person name="Boemecke M."/>
            <person name="Steckel S."/>
            <person name="Bhattacharyya A."/>
            <person name="Lykidis A."/>
            <person name="Overbeek R."/>
            <person name="Klenk H.-P."/>
            <person name="Gunsalus R.P."/>
            <person name="Fritz H.-J."/>
            <person name="Gottschalk G."/>
        </authorList>
    </citation>
    <scope>NUCLEOTIDE SEQUENCE [LARGE SCALE GENOMIC DNA]</scope>
    <source>
        <strain>ATCC BAA-159 / DSM 3647 / Goe1 / Go1 / JCM 11833 / OCM 88</strain>
    </source>
</reference>
<dbReference type="EC" id="4.1.1.5"/>
<dbReference type="EMBL" id="AE008384">
    <property type="protein sequence ID" value="AAM30335.1"/>
    <property type="molecule type" value="Genomic_DNA"/>
</dbReference>
<dbReference type="SMR" id="Q8PZ55"/>
<dbReference type="KEGG" id="mma:MM_0639"/>
<dbReference type="PATRIC" id="fig|192952.21.peg.757"/>
<dbReference type="eggNOG" id="arCOG03340">
    <property type="taxonomic scope" value="Archaea"/>
</dbReference>
<dbReference type="HOGENOM" id="CLU_072561_0_0_2"/>
<dbReference type="UniPathway" id="UPA00626">
    <property type="reaction ID" value="UER00678"/>
</dbReference>
<dbReference type="Proteomes" id="UP000000595">
    <property type="component" value="Chromosome"/>
</dbReference>
<dbReference type="GO" id="GO:0047605">
    <property type="term" value="F:acetolactate decarboxylase activity"/>
    <property type="evidence" value="ECO:0007669"/>
    <property type="project" value="UniProtKB-EC"/>
</dbReference>
<dbReference type="GO" id="GO:0045151">
    <property type="term" value="P:acetoin biosynthetic process"/>
    <property type="evidence" value="ECO:0007669"/>
    <property type="project" value="UniProtKB-KW"/>
</dbReference>
<dbReference type="CDD" id="cd17299">
    <property type="entry name" value="acetolactate_decarboxylase"/>
    <property type="match status" value="1"/>
</dbReference>
<dbReference type="Gene3D" id="3.30.1330.80">
    <property type="entry name" value="Hypothetical protein, similar to alpha- acetolactate decarboxylase, domain 2"/>
    <property type="match status" value="2"/>
</dbReference>
<dbReference type="InterPro" id="IPR005128">
    <property type="entry name" value="Acetolactate_a_deCO2ase"/>
</dbReference>
<dbReference type="NCBIfam" id="TIGR01252">
    <property type="entry name" value="acetolac_decarb"/>
    <property type="match status" value="1"/>
</dbReference>
<dbReference type="PANTHER" id="PTHR35524">
    <property type="entry name" value="ALPHA-ACETOLACTATE DECARBOXYLASE"/>
    <property type="match status" value="1"/>
</dbReference>
<dbReference type="PANTHER" id="PTHR35524:SF1">
    <property type="entry name" value="ALPHA-ACETOLACTATE DECARBOXYLASE"/>
    <property type="match status" value="1"/>
</dbReference>
<dbReference type="Pfam" id="PF03306">
    <property type="entry name" value="AAL_decarboxy"/>
    <property type="match status" value="1"/>
</dbReference>
<dbReference type="PIRSF" id="PIRSF001332">
    <property type="entry name" value="Acetolac_decarb"/>
    <property type="match status" value="1"/>
</dbReference>
<dbReference type="SUPFAM" id="SSF117856">
    <property type="entry name" value="AF0104/ALDC/Ptd012-like"/>
    <property type="match status" value="1"/>
</dbReference>
<comment type="function">
    <text evidence="1">Converts acetolactate into acetoin.</text>
</comment>
<comment type="catalytic activity">
    <reaction>
        <text>(2S)-2-acetolactate + H(+) = (R)-acetoin + CO2</text>
        <dbReference type="Rhea" id="RHEA:21580"/>
        <dbReference type="ChEBI" id="CHEBI:15378"/>
        <dbReference type="ChEBI" id="CHEBI:15686"/>
        <dbReference type="ChEBI" id="CHEBI:16526"/>
        <dbReference type="ChEBI" id="CHEBI:58476"/>
        <dbReference type="EC" id="4.1.1.5"/>
    </reaction>
</comment>
<comment type="pathway">
    <text>Polyol metabolism; (R,R)-butane-2,3-diol biosynthesis; (R,R)-butane-2,3-diol from pyruvate: step 2/3.</text>
</comment>
<comment type="similarity">
    <text evidence="3">Belongs to the alpha-acetolactate decarboxylase family.</text>
</comment>